<dbReference type="EMBL" id="CP000512">
    <property type="protein sequence ID" value="ABM33521.1"/>
    <property type="molecule type" value="Genomic_DNA"/>
</dbReference>
<dbReference type="RefSeq" id="WP_011796032.1">
    <property type="nucleotide sequence ID" value="NC_008752.1"/>
</dbReference>
<dbReference type="SMR" id="A1TRD3"/>
<dbReference type="STRING" id="397945.Aave_2954"/>
<dbReference type="GeneID" id="79792637"/>
<dbReference type="KEGG" id="aav:Aave_2954"/>
<dbReference type="eggNOG" id="COG0361">
    <property type="taxonomic scope" value="Bacteria"/>
</dbReference>
<dbReference type="HOGENOM" id="CLU_151267_4_1_4"/>
<dbReference type="OrthoDB" id="9803250at2"/>
<dbReference type="Proteomes" id="UP000002596">
    <property type="component" value="Chromosome"/>
</dbReference>
<dbReference type="GO" id="GO:0005829">
    <property type="term" value="C:cytosol"/>
    <property type="evidence" value="ECO:0007669"/>
    <property type="project" value="TreeGrafter"/>
</dbReference>
<dbReference type="GO" id="GO:0043022">
    <property type="term" value="F:ribosome binding"/>
    <property type="evidence" value="ECO:0007669"/>
    <property type="project" value="UniProtKB-UniRule"/>
</dbReference>
<dbReference type="GO" id="GO:0019843">
    <property type="term" value="F:rRNA binding"/>
    <property type="evidence" value="ECO:0007669"/>
    <property type="project" value="UniProtKB-UniRule"/>
</dbReference>
<dbReference type="GO" id="GO:0003743">
    <property type="term" value="F:translation initiation factor activity"/>
    <property type="evidence" value="ECO:0007669"/>
    <property type="project" value="UniProtKB-UniRule"/>
</dbReference>
<dbReference type="CDD" id="cd04451">
    <property type="entry name" value="S1_IF1"/>
    <property type="match status" value="1"/>
</dbReference>
<dbReference type="FunFam" id="2.40.50.140:FF:000002">
    <property type="entry name" value="Translation initiation factor IF-1"/>
    <property type="match status" value="1"/>
</dbReference>
<dbReference type="Gene3D" id="2.40.50.140">
    <property type="entry name" value="Nucleic acid-binding proteins"/>
    <property type="match status" value="1"/>
</dbReference>
<dbReference type="HAMAP" id="MF_00075">
    <property type="entry name" value="IF_1"/>
    <property type="match status" value="1"/>
</dbReference>
<dbReference type="InterPro" id="IPR012340">
    <property type="entry name" value="NA-bd_OB-fold"/>
</dbReference>
<dbReference type="InterPro" id="IPR006196">
    <property type="entry name" value="RNA-binding_domain_S1_IF1"/>
</dbReference>
<dbReference type="InterPro" id="IPR004368">
    <property type="entry name" value="TIF_IF1"/>
</dbReference>
<dbReference type="NCBIfam" id="TIGR00008">
    <property type="entry name" value="infA"/>
    <property type="match status" value="1"/>
</dbReference>
<dbReference type="PANTHER" id="PTHR33370">
    <property type="entry name" value="TRANSLATION INITIATION FACTOR IF-1, CHLOROPLASTIC"/>
    <property type="match status" value="1"/>
</dbReference>
<dbReference type="PANTHER" id="PTHR33370:SF1">
    <property type="entry name" value="TRANSLATION INITIATION FACTOR IF-1, CHLOROPLASTIC"/>
    <property type="match status" value="1"/>
</dbReference>
<dbReference type="Pfam" id="PF01176">
    <property type="entry name" value="eIF-1a"/>
    <property type="match status" value="1"/>
</dbReference>
<dbReference type="SUPFAM" id="SSF50249">
    <property type="entry name" value="Nucleic acid-binding proteins"/>
    <property type="match status" value="1"/>
</dbReference>
<dbReference type="PROSITE" id="PS50832">
    <property type="entry name" value="S1_IF1_TYPE"/>
    <property type="match status" value="1"/>
</dbReference>
<protein>
    <recommendedName>
        <fullName evidence="1">Translation initiation factor IF-1 2</fullName>
    </recommendedName>
</protein>
<evidence type="ECO:0000255" key="1">
    <source>
        <dbReference type="HAMAP-Rule" id="MF_00075"/>
    </source>
</evidence>
<sequence>MAKEELIEMQGSVTEVLPDSRFRVTLDNGHQLIAYTGGKMRKHHIRILAGDKVSLEMSPYDLTKGRITFRHLPGRGPGPSSSGSR</sequence>
<proteinExistence type="inferred from homology"/>
<gene>
    <name evidence="1" type="primary">infA2</name>
    <name type="ordered locus">Aave_2954</name>
</gene>
<comment type="function">
    <text evidence="1">One of the essential components for the initiation of protein synthesis. Stabilizes the binding of IF-2 and IF-3 on the 30S subunit to which N-formylmethionyl-tRNA(fMet) subsequently binds. Helps modulate mRNA selection, yielding the 30S pre-initiation complex (PIC). Upon addition of the 50S ribosomal subunit IF-1, IF-2 and IF-3 are released leaving the mature 70S translation initiation complex.</text>
</comment>
<comment type="subunit">
    <text evidence="1">Component of the 30S ribosomal translation pre-initiation complex which assembles on the 30S ribosome in the order IF-2 and IF-3, IF-1 and N-formylmethionyl-tRNA(fMet); mRNA recruitment can occur at any time during PIC assembly.</text>
</comment>
<comment type="subcellular location">
    <subcellularLocation>
        <location evidence="1">Cytoplasm</location>
    </subcellularLocation>
</comment>
<comment type="similarity">
    <text evidence="1">Belongs to the IF-1 family.</text>
</comment>
<feature type="chain" id="PRO_0000338746" description="Translation initiation factor IF-1 2">
    <location>
        <begin position="1"/>
        <end position="85"/>
    </location>
</feature>
<feature type="domain" description="S1-like" evidence="1">
    <location>
        <begin position="1"/>
        <end position="72"/>
    </location>
</feature>
<accession>A1TRD3</accession>
<reference key="1">
    <citation type="submission" date="2006-12" db="EMBL/GenBank/DDBJ databases">
        <title>Complete sequence of Acidovorax avenae subsp. citrulli AAC00-1.</title>
        <authorList>
            <person name="Copeland A."/>
            <person name="Lucas S."/>
            <person name="Lapidus A."/>
            <person name="Barry K."/>
            <person name="Detter J.C."/>
            <person name="Glavina del Rio T."/>
            <person name="Dalin E."/>
            <person name="Tice H."/>
            <person name="Pitluck S."/>
            <person name="Kiss H."/>
            <person name="Brettin T."/>
            <person name="Bruce D."/>
            <person name="Han C."/>
            <person name="Tapia R."/>
            <person name="Gilna P."/>
            <person name="Schmutz J."/>
            <person name="Larimer F."/>
            <person name="Land M."/>
            <person name="Hauser L."/>
            <person name="Kyrpides N."/>
            <person name="Kim E."/>
            <person name="Stahl D."/>
            <person name="Richardson P."/>
        </authorList>
    </citation>
    <scope>NUCLEOTIDE SEQUENCE [LARGE SCALE GENOMIC DNA]</scope>
    <source>
        <strain>AAC00-1</strain>
    </source>
</reference>
<keyword id="KW-0963">Cytoplasm</keyword>
<keyword id="KW-0396">Initiation factor</keyword>
<keyword id="KW-0648">Protein biosynthesis</keyword>
<keyword id="KW-0694">RNA-binding</keyword>
<keyword id="KW-0699">rRNA-binding</keyword>
<organism>
    <name type="scientific">Paracidovorax citrulli (strain AAC00-1)</name>
    <name type="common">Acidovorax citrulli</name>
    <dbReference type="NCBI Taxonomy" id="397945"/>
    <lineage>
        <taxon>Bacteria</taxon>
        <taxon>Pseudomonadati</taxon>
        <taxon>Pseudomonadota</taxon>
        <taxon>Betaproteobacteria</taxon>
        <taxon>Burkholderiales</taxon>
        <taxon>Comamonadaceae</taxon>
        <taxon>Paracidovorax</taxon>
    </lineage>
</organism>
<name>IF12_PARC0</name>